<reference key="1">
    <citation type="journal article" date="2005" name="Nature">
        <title>The map-based sequence of the rice genome.</title>
        <authorList>
            <consortium name="International rice genome sequencing project (IRGSP)"/>
        </authorList>
    </citation>
    <scope>NUCLEOTIDE SEQUENCE [LARGE SCALE GENOMIC DNA]</scope>
    <source>
        <strain>cv. Nipponbare</strain>
    </source>
</reference>
<reference key="2">
    <citation type="journal article" date="2008" name="Nucleic Acids Res.">
        <title>The rice annotation project database (RAP-DB): 2008 update.</title>
        <authorList>
            <consortium name="The rice annotation project (RAP)"/>
        </authorList>
    </citation>
    <scope>GENOME REANNOTATION</scope>
    <source>
        <strain>cv. Nipponbare</strain>
    </source>
</reference>
<reference key="3">
    <citation type="journal article" date="2013" name="Rice">
        <title>Improvement of the Oryza sativa Nipponbare reference genome using next generation sequence and optical map data.</title>
        <authorList>
            <person name="Kawahara Y."/>
            <person name="de la Bastide M."/>
            <person name="Hamilton J.P."/>
            <person name="Kanamori H."/>
            <person name="McCombie W.R."/>
            <person name="Ouyang S."/>
            <person name="Schwartz D.C."/>
            <person name="Tanaka T."/>
            <person name="Wu J."/>
            <person name="Zhou S."/>
            <person name="Childs K.L."/>
            <person name="Davidson R.M."/>
            <person name="Lin H."/>
            <person name="Quesada-Ocampo L."/>
            <person name="Vaillancourt B."/>
            <person name="Sakai H."/>
            <person name="Lee S.S."/>
            <person name="Kim J."/>
            <person name="Numa H."/>
            <person name="Itoh T."/>
            <person name="Buell C.R."/>
            <person name="Matsumoto T."/>
        </authorList>
    </citation>
    <scope>GENOME REANNOTATION</scope>
    <source>
        <strain>cv. Nipponbare</strain>
    </source>
</reference>
<reference key="4">
    <citation type="journal article" date="2003" name="Science">
        <title>Collection, mapping, and annotation of over 28,000 cDNA clones from japonica rice.</title>
        <authorList>
            <consortium name="The rice full-length cDNA consortium"/>
        </authorList>
    </citation>
    <scope>NUCLEOTIDE SEQUENCE [LARGE SCALE MRNA]</scope>
    <source>
        <strain>cv. Nipponbare</strain>
    </source>
</reference>
<reference key="5">
    <citation type="journal article" date="2009" name="Plant Mol. Biol.">
        <title>Characterization of Glossy1-homologous genes in rice involved in leaf wax accumulation and drought resistance.</title>
        <authorList>
            <person name="Islam M.A."/>
            <person name="Du H."/>
            <person name="Ning J."/>
            <person name="Ye H."/>
            <person name="Xiong L."/>
        </authorList>
    </citation>
    <scope>TISSUE SPECIFICITY</scope>
    <scope>INDUCTION BY DROUGHT; COLD AND SALT STRESS</scope>
    <scope>GENE FAMILY</scope>
    <scope>NOMENCLATURE</scope>
</reference>
<feature type="chain" id="PRO_0000445868" description="Very-long-chain aldehyde decarbonylase GL1-1">
    <location>
        <begin position="1"/>
        <end position="619"/>
    </location>
</feature>
<feature type="transmembrane region" description="Helical" evidence="2">
    <location>
        <begin position="44"/>
        <end position="64"/>
    </location>
</feature>
<feature type="transmembrane region" description="Helical" evidence="2">
    <location>
        <begin position="93"/>
        <end position="113"/>
    </location>
</feature>
<feature type="transmembrane region" description="Helical" evidence="2">
    <location>
        <begin position="123"/>
        <end position="143"/>
    </location>
</feature>
<feature type="transmembrane region" description="Helical" evidence="2">
    <location>
        <begin position="190"/>
        <end position="210"/>
    </location>
</feature>
<feature type="transmembrane region" description="Helical" evidence="2">
    <location>
        <begin position="322"/>
        <end position="342"/>
    </location>
</feature>
<feature type="domain" description="Fatty acid hydroxylase" evidence="2">
    <location>
        <begin position="129"/>
        <end position="269"/>
    </location>
</feature>
<feature type="sequence conflict" description="In Ref. 4; AK060786." evidence="5" ref="4">
    <original>H</original>
    <variation>R</variation>
    <location>
        <position position="493"/>
    </location>
</feature>
<comment type="function">
    <text evidence="1">Aldehyde decarbonylase involved in the conversion of aldehydes to alkanes. Core component of a very-long-chain alkane synthesis complex.</text>
</comment>
<comment type="catalytic activity">
    <reaction evidence="1">
        <text>a long-chain fatty aldehyde + 2 NADPH + O2 + H(+) = a long-chain alkane + formate + 2 NADP(+) + H2O</text>
        <dbReference type="Rhea" id="RHEA:21440"/>
        <dbReference type="ChEBI" id="CHEBI:15377"/>
        <dbReference type="ChEBI" id="CHEBI:15378"/>
        <dbReference type="ChEBI" id="CHEBI:15379"/>
        <dbReference type="ChEBI" id="CHEBI:15740"/>
        <dbReference type="ChEBI" id="CHEBI:17176"/>
        <dbReference type="ChEBI" id="CHEBI:57783"/>
        <dbReference type="ChEBI" id="CHEBI:58349"/>
        <dbReference type="ChEBI" id="CHEBI:83563"/>
        <dbReference type="EC" id="4.1.99.5"/>
    </reaction>
</comment>
<comment type="subunit">
    <text evidence="1">Homodimer.</text>
</comment>
<comment type="subcellular location">
    <subcellularLocation>
        <location evidence="1">Endoplasmic reticulum membrane</location>
        <topology evidence="1">Multi-pass membrane protein</topology>
    </subcellularLocation>
</comment>
<comment type="tissue specificity">
    <text evidence="3">Expressed in germinating seeds, embryos, radicals and leaves.</text>
</comment>
<comment type="induction">
    <text evidence="3">Induced by drought, cold and salt stress.</text>
</comment>
<comment type="similarity">
    <text evidence="5">Belongs to the sterol desaturase family.</text>
</comment>
<gene>
    <name evidence="4" type="primary">GL1-1</name>
    <name evidence="5" type="ordered locus">LOC_Os09g25850</name>
    <name evidence="7" type="ordered locus">Os09g0426800</name>
    <name evidence="6" type="ORF">OJ1299_A11.27</name>
    <name evidence="8" type="ORF">OSNPB_090426800</name>
</gene>
<protein>
    <recommendedName>
        <fullName evidence="5">Very-long-chain aldehyde decarbonylase GL1-1</fullName>
        <ecNumber evidence="1">4.1.99.5</ecNumber>
    </recommendedName>
    <alternativeName>
        <fullName evidence="4">Protein GLOSSY 1-1</fullName>
    </alternativeName>
</protein>
<sequence>MGAAFLSSWPWDNLGAYKYVLYAPLVGKAVAGRAWERASPDHWLLLLLVLFGVRALTYQLWSSFSNMLFATRRRRIVRDGVDFGQIDREWDWDNFLILQVHMAAAAFYAFPSLRHLPLWDARGLAVAALLHVAATEPLFYAAHRAFHRGHLFSCYHLQHHSAKVPQPFTAGFATPLEQLVLGALMAVPLAAACAAGHGSVALAFAYVLGFDNLRAMGHCNVEVFPGGLFQSLPVLKYLIYTPTYHTIHHTKEDANFCLFMPLFDLIGGTLDAQSWEMQKKTSAGVDEVPEFVFLAHVVDVMQSLHVPFVLRTFASTPFSVQPFLLPMWPFAFLVMLMMWAWSKTFVISCYRLRGRLHQMWAVPRYGFHYFLPFAKDGINNQIELAILRADKMGAKVVSLAALNKNEALNGGGTLFVNKHPGLRVRVVHGNTLTAAVILNEIPQGTTEVFMTGATSKLGRAIALYLCRKKVRVMMMTLSTERFQKIQREATPEHQQYLVQVTKYRSAQHCKTWIVGKWLSPREQRWAPPGTHFHQFVVPPIIGFRRDCTYGKLAAMRLPKDVQGLGACEYSLERGVVHACHAGGVVHFLEGYTHHEVGAIDVDRIDVVWEAALRHGLRPV</sequence>
<accession>Q69PA8</accession>
<organism>
    <name type="scientific">Oryza sativa subsp. japonica</name>
    <name type="common">Rice</name>
    <dbReference type="NCBI Taxonomy" id="39947"/>
    <lineage>
        <taxon>Eukaryota</taxon>
        <taxon>Viridiplantae</taxon>
        <taxon>Streptophyta</taxon>
        <taxon>Embryophyta</taxon>
        <taxon>Tracheophyta</taxon>
        <taxon>Spermatophyta</taxon>
        <taxon>Magnoliopsida</taxon>
        <taxon>Liliopsida</taxon>
        <taxon>Poales</taxon>
        <taxon>Poaceae</taxon>
        <taxon>BOP clade</taxon>
        <taxon>Oryzoideae</taxon>
        <taxon>Oryzeae</taxon>
        <taxon>Oryzinae</taxon>
        <taxon>Oryza</taxon>
        <taxon>Oryza sativa</taxon>
    </lineage>
</organism>
<dbReference type="EC" id="4.1.99.5" evidence="1"/>
<dbReference type="EMBL" id="AP005568">
    <property type="protein sequence ID" value="BAD33619.1"/>
    <property type="molecule type" value="Genomic_DNA"/>
</dbReference>
<dbReference type="EMBL" id="AP008215">
    <property type="protein sequence ID" value="BAF25141.1"/>
    <property type="molecule type" value="Genomic_DNA"/>
</dbReference>
<dbReference type="EMBL" id="AP014965">
    <property type="protein sequence ID" value="BAT08180.1"/>
    <property type="molecule type" value="Genomic_DNA"/>
</dbReference>
<dbReference type="EMBL" id="AK060786">
    <property type="status" value="NOT_ANNOTATED_CDS"/>
    <property type="molecule type" value="mRNA"/>
</dbReference>
<dbReference type="SMR" id="Q69PA8"/>
<dbReference type="FunCoup" id="Q69PA8">
    <property type="interactions" value="547"/>
</dbReference>
<dbReference type="STRING" id="39947.Q69PA8"/>
<dbReference type="PaxDb" id="39947-Q69PA8"/>
<dbReference type="EnsemblPlants" id="Os09t0426800-01">
    <property type="protein sequence ID" value="Os09t0426800-01"/>
    <property type="gene ID" value="Os09g0426800"/>
</dbReference>
<dbReference type="GeneID" id="4347115"/>
<dbReference type="Gramene" id="Os09t0426800-01">
    <property type="protein sequence ID" value="Os09t0426800-01"/>
    <property type="gene ID" value="Os09g0426800"/>
</dbReference>
<dbReference type="KEGG" id="dosa:Os09g0426800"/>
<dbReference type="KEGG" id="osa:4347115"/>
<dbReference type="eggNOG" id="ENOG502QQ3D">
    <property type="taxonomic scope" value="Eukaryota"/>
</dbReference>
<dbReference type="HOGENOM" id="CLU_017842_2_0_1"/>
<dbReference type="InParanoid" id="Q69PA8"/>
<dbReference type="OMA" id="MWAWAKT"/>
<dbReference type="OrthoDB" id="408954at2759"/>
<dbReference type="Proteomes" id="UP000000763">
    <property type="component" value="Chromosome 9"/>
</dbReference>
<dbReference type="Proteomes" id="UP000059680">
    <property type="component" value="Chromosome 9"/>
</dbReference>
<dbReference type="GO" id="GO:0005789">
    <property type="term" value="C:endoplasmic reticulum membrane"/>
    <property type="evidence" value="ECO:0007669"/>
    <property type="project" value="UniProtKB-SubCell"/>
</dbReference>
<dbReference type="GO" id="GO:0071771">
    <property type="term" value="F:aldehyde oxygenase (deformylating) activity"/>
    <property type="evidence" value="ECO:0007669"/>
    <property type="project" value="UniProtKB-EC"/>
</dbReference>
<dbReference type="GO" id="GO:0005506">
    <property type="term" value="F:iron ion binding"/>
    <property type="evidence" value="ECO:0007669"/>
    <property type="project" value="InterPro"/>
</dbReference>
<dbReference type="GO" id="GO:0016491">
    <property type="term" value="F:oxidoreductase activity"/>
    <property type="evidence" value="ECO:0007669"/>
    <property type="project" value="InterPro"/>
</dbReference>
<dbReference type="GO" id="GO:0008610">
    <property type="term" value="P:lipid biosynthetic process"/>
    <property type="evidence" value="ECO:0007669"/>
    <property type="project" value="InterPro"/>
</dbReference>
<dbReference type="GO" id="GO:0009409">
    <property type="term" value="P:response to cold"/>
    <property type="evidence" value="ECO:0000270"/>
    <property type="project" value="UniProtKB"/>
</dbReference>
<dbReference type="GO" id="GO:0009651">
    <property type="term" value="P:response to salt stress"/>
    <property type="evidence" value="ECO:0000270"/>
    <property type="project" value="UniProtKB"/>
</dbReference>
<dbReference type="GO" id="GO:0009414">
    <property type="term" value="P:response to water deprivation"/>
    <property type="evidence" value="ECO:0000270"/>
    <property type="project" value="UniProtKB"/>
</dbReference>
<dbReference type="Gene3D" id="3.40.50.720">
    <property type="entry name" value="NAD(P)-binding Rossmann-like Domain"/>
    <property type="match status" value="1"/>
</dbReference>
<dbReference type="InterPro" id="IPR021940">
    <property type="entry name" value="CER1-like_C"/>
</dbReference>
<dbReference type="InterPro" id="IPR006694">
    <property type="entry name" value="Fatty_acid_hydroxylase"/>
</dbReference>
<dbReference type="InterPro" id="IPR036291">
    <property type="entry name" value="NAD(P)-bd_dom_sf"/>
</dbReference>
<dbReference type="InterPro" id="IPR050307">
    <property type="entry name" value="Sterol_Desaturase_Related"/>
</dbReference>
<dbReference type="PANTHER" id="PTHR11863">
    <property type="entry name" value="STEROL DESATURASE"/>
    <property type="match status" value="1"/>
</dbReference>
<dbReference type="Pfam" id="PF12076">
    <property type="entry name" value="CER1-like_C"/>
    <property type="match status" value="1"/>
</dbReference>
<dbReference type="Pfam" id="PF04116">
    <property type="entry name" value="FA_hydroxylase"/>
    <property type="match status" value="1"/>
</dbReference>
<dbReference type="SUPFAM" id="SSF51735">
    <property type="entry name" value="NAD(P)-binding Rossmann-fold domains"/>
    <property type="match status" value="1"/>
</dbReference>
<proteinExistence type="evidence at transcript level"/>
<keyword id="KW-0256">Endoplasmic reticulum</keyword>
<keyword id="KW-0456">Lyase</keyword>
<keyword id="KW-0472">Membrane</keyword>
<keyword id="KW-0521">NADP</keyword>
<keyword id="KW-1185">Reference proteome</keyword>
<keyword id="KW-0812">Transmembrane</keyword>
<keyword id="KW-1133">Transmembrane helix</keyword>
<name>GLO11_ORYSJ</name>
<evidence type="ECO:0000250" key="1">
    <source>
        <dbReference type="UniProtKB" id="F4HVY0"/>
    </source>
</evidence>
<evidence type="ECO:0000255" key="2"/>
<evidence type="ECO:0000269" key="3">
    <source>
    </source>
</evidence>
<evidence type="ECO:0000303" key="4">
    <source>
    </source>
</evidence>
<evidence type="ECO:0000305" key="5"/>
<evidence type="ECO:0000312" key="6">
    <source>
        <dbReference type="EMBL" id="BAD33619.1"/>
    </source>
</evidence>
<evidence type="ECO:0000312" key="7">
    <source>
        <dbReference type="EMBL" id="BAF25141.1"/>
    </source>
</evidence>
<evidence type="ECO:0000312" key="8">
    <source>
        <dbReference type="EMBL" id="BAT08180.1"/>
    </source>
</evidence>